<accession>O35900</accession>
<proteinExistence type="evidence at protein level"/>
<sequence>MLFYSFFKSLVGKDVVVELKNDLSICGTLHSVDQYLNIKLTDISVTDPEKYPHMLSVKNCFIRGSVVRYVQLPADEVDTQLLQDAARKEALQQKQ</sequence>
<protein>
    <recommendedName>
        <fullName>U6 snRNA-associated Sm-like protein LSm2</fullName>
    </recommendedName>
    <alternativeName>
        <fullName>Protein G7b</fullName>
    </alternativeName>
    <alternativeName>
        <fullName>snRNP core Sm-like protein Sm-x5</fullName>
    </alternativeName>
</protein>
<gene>
    <name type="primary">Lsm2</name>
    <name type="synonym">G7b</name>
</gene>
<reference key="1">
    <citation type="journal article" date="1997" name="Immunogenetics">
        <title>A gene belonging to the Sm family of snRNP core proteins maps within the mouse MHC.</title>
        <authorList>
            <person name="Bedian V."/>
            <person name="Adams T."/>
            <person name="Geiger E.A."/>
            <person name="Bailey L.C."/>
            <person name="Gasser D.L."/>
        </authorList>
    </citation>
    <scope>NUCLEOTIDE SEQUENCE [GENOMIC DNA]</scope>
    <source>
        <strain>BALB/cJ</strain>
    </source>
</reference>
<reference key="2">
    <citation type="journal article" date="2001" name="Immunogenetics">
        <title>Genotype versus phenotype: conflicting results in mapping a lung tumor susceptibility locus to the G7c recombination interval in the mouse MHC class III region.</title>
        <authorList>
            <person name="van Kooij M."/>
            <person name="de Groot K."/>
            <person name="van Vugt H."/>
            <person name="Aten J."/>
            <person name="Snoek M."/>
        </authorList>
    </citation>
    <scope>NUCLEOTIDE SEQUENCE [GENOMIC DNA]</scope>
    <source>
        <strain>B10.A</strain>
    </source>
</reference>
<reference key="3">
    <citation type="journal article" date="2004" name="Genome Res.">
        <title>The status, quality, and expansion of the NIH full-length cDNA project: the Mammalian Gene Collection (MGC).</title>
        <authorList>
            <consortium name="The MGC Project Team"/>
        </authorList>
    </citation>
    <scope>NUCLEOTIDE SEQUENCE [LARGE SCALE MRNA]</scope>
    <source>
        <strain>Czech II</strain>
        <tissue>Mammary tumor</tissue>
    </source>
</reference>
<reference key="4">
    <citation type="journal article" date="2010" name="Cell">
        <title>A tissue-specific atlas of mouse protein phosphorylation and expression.</title>
        <authorList>
            <person name="Huttlin E.L."/>
            <person name="Jedrychowski M.P."/>
            <person name="Elias J.E."/>
            <person name="Goswami T."/>
            <person name="Rad R."/>
            <person name="Beausoleil S.A."/>
            <person name="Villen J."/>
            <person name="Haas W."/>
            <person name="Sowa M.E."/>
            <person name="Gygi S.P."/>
        </authorList>
    </citation>
    <scope>IDENTIFICATION BY MASS SPECTROMETRY [LARGE SCALE ANALYSIS]</scope>
    <source>
        <tissue>Brain</tissue>
        <tissue>Brown adipose tissue</tissue>
        <tissue>Heart</tissue>
        <tissue>Kidney</tissue>
        <tissue>Liver</tissue>
        <tissue>Lung</tissue>
        <tissue>Pancreas</tissue>
        <tissue>Spleen</tissue>
        <tissue>Testis</tissue>
    </source>
</reference>
<name>LSM2_MOUSE</name>
<dbReference type="EMBL" id="U85207">
    <property type="protein sequence ID" value="AAB72037.1"/>
    <property type="molecule type" value="Genomic_DNA"/>
</dbReference>
<dbReference type="EMBL" id="AF397035">
    <property type="protein sequence ID" value="AAL14450.1"/>
    <property type="molecule type" value="Genomic_DNA"/>
</dbReference>
<dbReference type="EMBL" id="AF397036">
    <property type="protein sequence ID" value="AAL14458.1"/>
    <property type="molecule type" value="Genomic_DNA"/>
</dbReference>
<dbReference type="EMBL" id="BC014288">
    <property type="protein sequence ID" value="AAH14288.1"/>
    <property type="molecule type" value="mRNA"/>
</dbReference>
<dbReference type="CCDS" id="CCDS50081.1"/>
<dbReference type="RefSeq" id="NP_001103571.1">
    <property type="nucleotide sequence ID" value="NM_001110101.2"/>
</dbReference>
<dbReference type="SMR" id="O35900"/>
<dbReference type="BioGRID" id="205506">
    <property type="interactions" value="34"/>
</dbReference>
<dbReference type="FunCoup" id="O35900">
    <property type="interactions" value="3315"/>
</dbReference>
<dbReference type="STRING" id="10090.ENSMUSP00000007266"/>
<dbReference type="iPTMnet" id="O35900"/>
<dbReference type="PhosphoSitePlus" id="O35900"/>
<dbReference type="REPRODUCTION-2DPAGE" id="O35900"/>
<dbReference type="jPOST" id="O35900"/>
<dbReference type="PaxDb" id="10090-ENSMUSP00000007266"/>
<dbReference type="PeptideAtlas" id="O35900"/>
<dbReference type="ProteomicsDB" id="292047"/>
<dbReference type="Pumba" id="O35900"/>
<dbReference type="Antibodypedia" id="27800">
    <property type="antibodies" value="196 antibodies from 33 providers"/>
</dbReference>
<dbReference type="DNASU" id="27756"/>
<dbReference type="Ensembl" id="ENSMUST00000114011.11">
    <property type="protein sequence ID" value="ENSMUSP00000109644.5"/>
    <property type="gene ID" value="ENSMUSG00000007050.18"/>
</dbReference>
<dbReference type="GeneID" id="27756"/>
<dbReference type="KEGG" id="mmu:27756"/>
<dbReference type="UCSC" id="uc008cer.3">
    <property type="organism name" value="mouse"/>
</dbReference>
<dbReference type="AGR" id="MGI:90676"/>
<dbReference type="CTD" id="57819"/>
<dbReference type="MGI" id="MGI:90676">
    <property type="gene designation" value="Lsm2"/>
</dbReference>
<dbReference type="VEuPathDB" id="HostDB:ENSMUSG00000007050"/>
<dbReference type="eggNOG" id="KOG3448">
    <property type="taxonomic scope" value="Eukaryota"/>
</dbReference>
<dbReference type="GeneTree" id="ENSGT00390000016597"/>
<dbReference type="HOGENOM" id="CLU_130474_3_0_1"/>
<dbReference type="InParanoid" id="O35900"/>
<dbReference type="OMA" id="DNISCTD"/>
<dbReference type="OrthoDB" id="10256176at2759"/>
<dbReference type="PhylomeDB" id="O35900"/>
<dbReference type="Reactome" id="R-MMU-430039">
    <property type="pathway name" value="mRNA decay by 5' to 3' exoribonuclease"/>
</dbReference>
<dbReference type="Reactome" id="R-MMU-72163">
    <property type="pathway name" value="mRNA Splicing - Major Pathway"/>
</dbReference>
<dbReference type="BioGRID-ORCS" id="27756">
    <property type="hits" value="28 hits in 77 CRISPR screens"/>
</dbReference>
<dbReference type="ChiTaRS" id="Lsm2">
    <property type="organism name" value="mouse"/>
</dbReference>
<dbReference type="PRO" id="PR:O35900"/>
<dbReference type="Proteomes" id="UP000000589">
    <property type="component" value="Chromosome 17"/>
</dbReference>
<dbReference type="RNAct" id="O35900">
    <property type="molecule type" value="protein"/>
</dbReference>
<dbReference type="Bgee" id="ENSMUSG00000007050">
    <property type="expression patterns" value="Expressed in undifferentiated genital tubercle and 197 other cell types or tissues"/>
</dbReference>
<dbReference type="ExpressionAtlas" id="O35900">
    <property type="expression patterns" value="baseline and differential"/>
</dbReference>
<dbReference type="GO" id="GO:0005737">
    <property type="term" value="C:cytoplasm"/>
    <property type="evidence" value="ECO:0000266"/>
    <property type="project" value="MGI"/>
</dbReference>
<dbReference type="GO" id="GO:0120115">
    <property type="term" value="C:Lsm2-8 complex"/>
    <property type="evidence" value="ECO:0000250"/>
    <property type="project" value="UniProtKB"/>
</dbReference>
<dbReference type="GO" id="GO:0005634">
    <property type="term" value="C:nucleus"/>
    <property type="evidence" value="ECO:0000250"/>
    <property type="project" value="UniProtKB"/>
</dbReference>
<dbReference type="GO" id="GO:0071005">
    <property type="term" value="C:U2-type precatalytic spliceosome"/>
    <property type="evidence" value="ECO:0000250"/>
    <property type="project" value="UniProtKB"/>
</dbReference>
<dbReference type="GO" id="GO:0046540">
    <property type="term" value="C:U4/U6 x U5 tri-snRNP complex"/>
    <property type="evidence" value="ECO:0000250"/>
    <property type="project" value="UniProtKB"/>
</dbReference>
<dbReference type="GO" id="GO:0019901">
    <property type="term" value="F:protein kinase binding"/>
    <property type="evidence" value="ECO:0000314"/>
    <property type="project" value="MGI"/>
</dbReference>
<dbReference type="GO" id="GO:0003723">
    <property type="term" value="F:RNA binding"/>
    <property type="evidence" value="ECO:0007669"/>
    <property type="project" value="UniProtKB-KW"/>
</dbReference>
<dbReference type="GO" id="GO:0006402">
    <property type="term" value="P:mRNA catabolic process"/>
    <property type="evidence" value="ECO:0000266"/>
    <property type="project" value="MGI"/>
</dbReference>
<dbReference type="GO" id="GO:0000398">
    <property type="term" value="P:mRNA splicing, via spliceosome"/>
    <property type="evidence" value="ECO:0000250"/>
    <property type="project" value="UniProtKB"/>
</dbReference>
<dbReference type="GO" id="GO:0000244">
    <property type="term" value="P:spliceosomal tri-snRNP complex assembly"/>
    <property type="evidence" value="ECO:0000266"/>
    <property type="project" value="MGI"/>
</dbReference>
<dbReference type="CDD" id="cd01725">
    <property type="entry name" value="LSm2"/>
    <property type="match status" value="1"/>
</dbReference>
<dbReference type="FunFam" id="2.30.30.100:FF:000009">
    <property type="entry name" value="U6 snRNA-associated Sm-like protein LSm2"/>
    <property type="match status" value="1"/>
</dbReference>
<dbReference type="Gene3D" id="2.30.30.100">
    <property type="match status" value="1"/>
</dbReference>
<dbReference type="InterPro" id="IPR010920">
    <property type="entry name" value="LSM_dom_sf"/>
</dbReference>
<dbReference type="InterPro" id="IPR047575">
    <property type="entry name" value="Sm"/>
</dbReference>
<dbReference type="InterPro" id="IPR001163">
    <property type="entry name" value="Sm_dom_euk/arc"/>
</dbReference>
<dbReference type="InterPro" id="IPR016654">
    <property type="entry name" value="U6_snRNA_Lsm2"/>
</dbReference>
<dbReference type="PANTHER" id="PTHR13829">
    <property type="entry name" value="SNRNP CORE PROTEIN FAMILY MEMBER"/>
    <property type="match status" value="1"/>
</dbReference>
<dbReference type="PANTHER" id="PTHR13829:SF2">
    <property type="entry name" value="U6 SNRNA-ASSOCIATED SM-LIKE PROTEIN LSM2"/>
    <property type="match status" value="1"/>
</dbReference>
<dbReference type="Pfam" id="PF01423">
    <property type="entry name" value="LSM"/>
    <property type="match status" value="1"/>
</dbReference>
<dbReference type="PIRSF" id="PIRSF016394">
    <property type="entry name" value="U6_snRNA_Lsm2"/>
    <property type="match status" value="1"/>
</dbReference>
<dbReference type="SMART" id="SM00651">
    <property type="entry name" value="Sm"/>
    <property type="match status" value="1"/>
</dbReference>
<dbReference type="SUPFAM" id="SSF50182">
    <property type="entry name" value="Sm-like ribonucleoproteins"/>
    <property type="match status" value="1"/>
</dbReference>
<dbReference type="PROSITE" id="PS52002">
    <property type="entry name" value="SM"/>
    <property type="match status" value="1"/>
</dbReference>
<keyword id="KW-0507">mRNA processing</keyword>
<keyword id="KW-0508">mRNA splicing</keyword>
<keyword id="KW-0539">Nucleus</keyword>
<keyword id="KW-0597">Phosphoprotein</keyword>
<keyword id="KW-1185">Reference proteome</keyword>
<keyword id="KW-0687">Ribonucleoprotein</keyword>
<keyword id="KW-0694">RNA-binding</keyword>
<keyword id="KW-0747">Spliceosome</keyword>
<organism>
    <name type="scientific">Mus musculus</name>
    <name type="common">Mouse</name>
    <dbReference type="NCBI Taxonomy" id="10090"/>
    <lineage>
        <taxon>Eukaryota</taxon>
        <taxon>Metazoa</taxon>
        <taxon>Chordata</taxon>
        <taxon>Craniata</taxon>
        <taxon>Vertebrata</taxon>
        <taxon>Euteleostomi</taxon>
        <taxon>Mammalia</taxon>
        <taxon>Eutheria</taxon>
        <taxon>Euarchontoglires</taxon>
        <taxon>Glires</taxon>
        <taxon>Rodentia</taxon>
        <taxon>Myomorpha</taxon>
        <taxon>Muroidea</taxon>
        <taxon>Muridae</taxon>
        <taxon>Murinae</taxon>
        <taxon>Mus</taxon>
        <taxon>Mus</taxon>
    </lineage>
</organism>
<comment type="function">
    <text evidence="1">Plays a role in pre-mRNA splicing as component of the U4/U6-U5 tri-snRNP complex that is involved in spliceosome assembly, and as component of the precatalytic spliceosome (spliceosome B complex). The heptameric LSM2-8 complex binds specifically to the 3'-terminal U-tract of U6 snRNA.</text>
</comment>
<comment type="subunit">
    <text evidence="1">Component of the precatalytic spliceosome (spliceosome B complex). Component of the U4/U6-U5 tri-snRNP complex, a building block of the precatalytic spliceosome (spliceosome B complex). The U4/U6-U5 tri-snRNP complex is composed of the U4, U6 and U5 snRNAs and at least PRPF3, PRPF4, PRPF6, PRPF8, PRPF31, SNRNP200, TXNL4A, SNRNP40, SNRPB, SNRPD1, SNRPD2, SNRPD3, SNRPE, SNRPF, SNRPG, DDX23, CD2BP2, PPIH, SNU13, EFTUD2, SART1 and USP39, plus LSM2, LSM3, LSM4, LSM5, LSM6, LSM7 and LSM8. LSM2, LSM3, LSM4, LSM5, LSM6, LSM7 and LSM8 form a heptameric, ring-shaped subcomplex (the LSM2-8 complex) that is part of the U4/U6-U5 tri-snRNP complex and the precatalytic spliceosome.</text>
</comment>
<comment type="subcellular location">
    <subcellularLocation>
        <location evidence="1">Nucleus</location>
    </subcellularLocation>
</comment>
<comment type="similarity">
    <text evidence="3">Belongs to the snRNP Sm proteins family.</text>
</comment>
<evidence type="ECO:0000250" key="1">
    <source>
        <dbReference type="UniProtKB" id="Q9Y333"/>
    </source>
</evidence>
<evidence type="ECO:0000255" key="2">
    <source>
        <dbReference type="PROSITE-ProRule" id="PRU01346"/>
    </source>
</evidence>
<evidence type="ECO:0000305" key="3"/>
<feature type="chain" id="PRO_0000125557" description="U6 snRNA-associated Sm-like protein LSm2">
    <location>
        <begin position="1"/>
        <end position="95"/>
    </location>
</feature>
<feature type="domain" description="Sm" evidence="2">
    <location>
        <begin position="2"/>
        <end position="76"/>
    </location>
</feature>
<feature type="modified residue" description="Phosphothreonine" evidence="1">
    <location>
        <position position="79"/>
    </location>
</feature>